<comment type="function">
    <text evidence="1">An accessory protein needed during the final step in the assembly of 30S ribosomal subunit, possibly for assembly of the head region. Essential for efficient processing of 16S rRNA. May be needed both before and after RbfA during the maturation of 16S rRNA. It has affinity for free ribosomal 30S subunits but not for 70S ribosomes.</text>
</comment>
<comment type="subunit">
    <text evidence="1">Binds ribosomal protein uS19.</text>
</comment>
<comment type="subcellular location">
    <subcellularLocation>
        <location evidence="1">Cytoplasm</location>
    </subcellularLocation>
</comment>
<comment type="domain">
    <text evidence="1">The PRC barrel domain binds ribosomal protein uS19.</text>
</comment>
<comment type="similarity">
    <text evidence="1">Belongs to the RimM family.</text>
</comment>
<protein>
    <recommendedName>
        <fullName evidence="1">Ribosome maturation factor RimM</fullName>
    </recommendedName>
</protein>
<keyword id="KW-0143">Chaperone</keyword>
<keyword id="KW-0963">Cytoplasm</keyword>
<keyword id="KW-1185">Reference proteome</keyword>
<keyword id="KW-0690">Ribosome biogenesis</keyword>
<keyword id="KW-0698">rRNA processing</keyword>
<evidence type="ECO:0000255" key="1">
    <source>
        <dbReference type="HAMAP-Rule" id="MF_00014"/>
    </source>
</evidence>
<sequence>MEYVVARVGRPHGVRGEVTVEVRTDDPDTRFAPGAVLRTDPDRGPLTVATARWHNGTLLLTFQGVEDRTAVEGLRNTRLVVDLDDEADPDDDAWYPHQLQGLAAVTTTGTPLGTVKDLLTGGAQDVLVVTGTDGREVLVPFVTPLVPRVDVKRGKVVLSPPGGLFVELPGEPEE</sequence>
<reference key="1">
    <citation type="journal article" date="2008" name="PLoS ONE">
        <title>Survival in nuclear waste, extreme resistance, and potential applications gleaned from the genome sequence of Kineococcus radiotolerans SRS30216.</title>
        <authorList>
            <person name="Bagwell C.E."/>
            <person name="Bhat S."/>
            <person name="Hawkins G.M."/>
            <person name="Smith B.W."/>
            <person name="Biswas T."/>
            <person name="Hoover T.R."/>
            <person name="Saunders E."/>
            <person name="Han C.S."/>
            <person name="Tsodikov O.V."/>
            <person name="Shimkets L.J."/>
        </authorList>
    </citation>
    <scope>NUCLEOTIDE SEQUENCE [LARGE SCALE GENOMIC DNA]</scope>
    <source>
        <strain>ATCC BAA-149 / DSM 14245 / SRS30216</strain>
    </source>
</reference>
<accession>A6W7U9</accession>
<name>RIMM_KINRD</name>
<feature type="chain" id="PRO_0000351767" description="Ribosome maturation factor RimM">
    <location>
        <begin position="1"/>
        <end position="174"/>
    </location>
</feature>
<feature type="domain" description="PRC barrel" evidence="1">
    <location>
        <begin position="91"/>
        <end position="164"/>
    </location>
</feature>
<dbReference type="EMBL" id="CP000750">
    <property type="protein sequence ID" value="ABS02888.1"/>
    <property type="molecule type" value="Genomic_DNA"/>
</dbReference>
<dbReference type="RefSeq" id="WP_011981973.1">
    <property type="nucleotide sequence ID" value="NC_009664.2"/>
</dbReference>
<dbReference type="SMR" id="A6W7U9"/>
<dbReference type="STRING" id="266940.Krad_1400"/>
<dbReference type="KEGG" id="kra:Krad_1400"/>
<dbReference type="eggNOG" id="COG0806">
    <property type="taxonomic scope" value="Bacteria"/>
</dbReference>
<dbReference type="HOGENOM" id="CLU_077636_0_0_11"/>
<dbReference type="OrthoDB" id="5381335at2"/>
<dbReference type="Proteomes" id="UP000001116">
    <property type="component" value="Chromosome"/>
</dbReference>
<dbReference type="GO" id="GO:0005737">
    <property type="term" value="C:cytoplasm"/>
    <property type="evidence" value="ECO:0007669"/>
    <property type="project" value="UniProtKB-SubCell"/>
</dbReference>
<dbReference type="GO" id="GO:0005840">
    <property type="term" value="C:ribosome"/>
    <property type="evidence" value="ECO:0007669"/>
    <property type="project" value="InterPro"/>
</dbReference>
<dbReference type="GO" id="GO:0043022">
    <property type="term" value="F:ribosome binding"/>
    <property type="evidence" value="ECO:0007669"/>
    <property type="project" value="InterPro"/>
</dbReference>
<dbReference type="GO" id="GO:0042274">
    <property type="term" value="P:ribosomal small subunit biogenesis"/>
    <property type="evidence" value="ECO:0007669"/>
    <property type="project" value="UniProtKB-UniRule"/>
</dbReference>
<dbReference type="GO" id="GO:0006364">
    <property type="term" value="P:rRNA processing"/>
    <property type="evidence" value="ECO:0007669"/>
    <property type="project" value="UniProtKB-UniRule"/>
</dbReference>
<dbReference type="Gene3D" id="2.30.30.240">
    <property type="entry name" value="PRC-barrel domain"/>
    <property type="match status" value="1"/>
</dbReference>
<dbReference type="Gene3D" id="2.40.30.60">
    <property type="entry name" value="RimM"/>
    <property type="match status" value="1"/>
</dbReference>
<dbReference type="HAMAP" id="MF_00014">
    <property type="entry name" value="Ribosome_mat_RimM"/>
    <property type="match status" value="1"/>
</dbReference>
<dbReference type="InterPro" id="IPR011033">
    <property type="entry name" value="PRC_barrel-like_sf"/>
</dbReference>
<dbReference type="InterPro" id="IPR056792">
    <property type="entry name" value="PRC_RimM"/>
</dbReference>
<dbReference type="InterPro" id="IPR011961">
    <property type="entry name" value="RimM"/>
</dbReference>
<dbReference type="InterPro" id="IPR002676">
    <property type="entry name" value="RimM_N"/>
</dbReference>
<dbReference type="InterPro" id="IPR036976">
    <property type="entry name" value="RimM_N_sf"/>
</dbReference>
<dbReference type="InterPro" id="IPR009000">
    <property type="entry name" value="Transl_B-barrel_sf"/>
</dbReference>
<dbReference type="NCBIfam" id="TIGR02273">
    <property type="entry name" value="16S_RimM"/>
    <property type="match status" value="1"/>
</dbReference>
<dbReference type="PANTHER" id="PTHR33692">
    <property type="entry name" value="RIBOSOME MATURATION FACTOR RIMM"/>
    <property type="match status" value="1"/>
</dbReference>
<dbReference type="PANTHER" id="PTHR33692:SF1">
    <property type="entry name" value="RIBOSOME MATURATION FACTOR RIMM"/>
    <property type="match status" value="1"/>
</dbReference>
<dbReference type="Pfam" id="PF24986">
    <property type="entry name" value="PRC_RimM"/>
    <property type="match status" value="1"/>
</dbReference>
<dbReference type="Pfam" id="PF01782">
    <property type="entry name" value="RimM"/>
    <property type="match status" value="1"/>
</dbReference>
<dbReference type="SUPFAM" id="SSF50346">
    <property type="entry name" value="PRC-barrel domain"/>
    <property type="match status" value="1"/>
</dbReference>
<dbReference type="SUPFAM" id="SSF50447">
    <property type="entry name" value="Translation proteins"/>
    <property type="match status" value="1"/>
</dbReference>
<proteinExistence type="inferred from homology"/>
<organism>
    <name type="scientific">Kineococcus radiotolerans (strain ATCC BAA-149 / DSM 14245 / SRS30216)</name>
    <dbReference type="NCBI Taxonomy" id="266940"/>
    <lineage>
        <taxon>Bacteria</taxon>
        <taxon>Bacillati</taxon>
        <taxon>Actinomycetota</taxon>
        <taxon>Actinomycetes</taxon>
        <taxon>Kineosporiales</taxon>
        <taxon>Kineosporiaceae</taxon>
        <taxon>Kineococcus</taxon>
    </lineage>
</organism>
<gene>
    <name evidence="1" type="primary">rimM</name>
    <name type="ordered locus">Krad_1400</name>
</gene>